<keyword id="KW-0004">4Fe-4S</keyword>
<keyword id="KW-0963">Cytoplasm</keyword>
<keyword id="KW-0408">Iron</keyword>
<keyword id="KW-0411">Iron-sulfur</keyword>
<keyword id="KW-0479">Metal-binding</keyword>
<keyword id="KW-0662">Pyridine nucleotide biosynthesis</keyword>
<keyword id="KW-1185">Reference proteome</keyword>
<keyword id="KW-0808">Transferase</keyword>
<evidence type="ECO:0000255" key="1">
    <source>
        <dbReference type="HAMAP-Rule" id="MF_00568"/>
    </source>
</evidence>
<comment type="function">
    <text evidence="1">Catalyzes the condensation of iminoaspartate with dihydroxyacetone phosphate to form quinolinate.</text>
</comment>
<comment type="catalytic activity">
    <reaction evidence="1">
        <text>iminosuccinate + dihydroxyacetone phosphate = quinolinate + phosphate + 2 H2O + H(+)</text>
        <dbReference type="Rhea" id="RHEA:25888"/>
        <dbReference type="ChEBI" id="CHEBI:15377"/>
        <dbReference type="ChEBI" id="CHEBI:15378"/>
        <dbReference type="ChEBI" id="CHEBI:29959"/>
        <dbReference type="ChEBI" id="CHEBI:43474"/>
        <dbReference type="ChEBI" id="CHEBI:57642"/>
        <dbReference type="ChEBI" id="CHEBI:77875"/>
        <dbReference type="EC" id="2.5.1.72"/>
    </reaction>
    <physiologicalReaction direction="left-to-right" evidence="1">
        <dbReference type="Rhea" id="RHEA:25889"/>
    </physiologicalReaction>
</comment>
<comment type="cofactor">
    <cofactor evidence="1">
        <name>[4Fe-4S] cluster</name>
        <dbReference type="ChEBI" id="CHEBI:49883"/>
    </cofactor>
    <text evidence="1">Binds 1 [4Fe-4S] cluster per subunit.</text>
</comment>
<comment type="pathway">
    <text evidence="1">Cofactor biosynthesis; NAD(+) biosynthesis; quinolinate from iminoaspartate: step 1/1.</text>
</comment>
<comment type="subcellular location">
    <subcellularLocation>
        <location evidence="1">Cytoplasm</location>
    </subcellularLocation>
</comment>
<comment type="similarity">
    <text evidence="1">Belongs to the quinolinate synthase family. Type 2 subfamily.</text>
</comment>
<gene>
    <name evidence="1" type="primary">nadA2</name>
    <name type="ordered locus">MA_2716</name>
</gene>
<feature type="chain" id="PRO_0000155802" description="Quinolinate synthase 2">
    <location>
        <begin position="1"/>
        <end position="310"/>
    </location>
</feature>
<feature type="binding site" evidence="1">
    <location>
        <position position="30"/>
    </location>
    <ligand>
        <name>iminosuccinate</name>
        <dbReference type="ChEBI" id="CHEBI:77875"/>
    </ligand>
</feature>
<feature type="binding site" evidence="1">
    <location>
        <position position="47"/>
    </location>
    <ligand>
        <name>iminosuccinate</name>
        <dbReference type="ChEBI" id="CHEBI:77875"/>
    </ligand>
</feature>
<feature type="binding site" evidence="1">
    <location>
        <position position="92"/>
    </location>
    <ligand>
        <name>[4Fe-4S] cluster</name>
        <dbReference type="ChEBI" id="CHEBI:49883"/>
    </ligand>
</feature>
<feature type="binding site" evidence="1">
    <location>
        <begin position="118"/>
        <end position="120"/>
    </location>
    <ligand>
        <name>iminosuccinate</name>
        <dbReference type="ChEBI" id="CHEBI:77875"/>
    </ligand>
</feature>
<feature type="binding site" evidence="1">
    <location>
        <position position="135"/>
    </location>
    <ligand>
        <name>iminosuccinate</name>
        <dbReference type="ChEBI" id="CHEBI:77875"/>
    </ligand>
</feature>
<feature type="binding site" evidence="1">
    <location>
        <position position="177"/>
    </location>
    <ligand>
        <name>[4Fe-4S] cluster</name>
        <dbReference type="ChEBI" id="CHEBI:49883"/>
    </ligand>
</feature>
<feature type="binding site" evidence="1">
    <location>
        <begin position="203"/>
        <end position="205"/>
    </location>
    <ligand>
        <name>iminosuccinate</name>
        <dbReference type="ChEBI" id="CHEBI:77875"/>
    </ligand>
</feature>
<feature type="binding site" evidence="1">
    <location>
        <position position="220"/>
    </location>
    <ligand>
        <name>iminosuccinate</name>
        <dbReference type="ChEBI" id="CHEBI:77875"/>
    </ligand>
</feature>
<feature type="binding site" evidence="1">
    <location>
        <position position="265"/>
    </location>
    <ligand>
        <name>[4Fe-4S] cluster</name>
        <dbReference type="ChEBI" id="CHEBI:49883"/>
    </ligand>
</feature>
<reference key="1">
    <citation type="journal article" date="2002" name="Genome Res.">
        <title>The genome of Methanosarcina acetivorans reveals extensive metabolic and physiological diversity.</title>
        <authorList>
            <person name="Galagan J.E."/>
            <person name="Nusbaum C."/>
            <person name="Roy A."/>
            <person name="Endrizzi M.G."/>
            <person name="Macdonald P."/>
            <person name="FitzHugh W."/>
            <person name="Calvo S."/>
            <person name="Engels R."/>
            <person name="Smirnov S."/>
            <person name="Atnoor D."/>
            <person name="Brown A."/>
            <person name="Allen N."/>
            <person name="Naylor J."/>
            <person name="Stange-Thomann N."/>
            <person name="DeArellano K."/>
            <person name="Johnson R."/>
            <person name="Linton L."/>
            <person name="McEwan P."/>
            <person name="McKernan K."/>
            <person name="Talamas J."/>
            <person name="Tirrell A."/>
            <person name="Ye W."/>
            <person name="Zimmer A."/>
            <person name="Barber R.D."/>
            <person name="Cann I."/>
            <person name="Graham D.E."/>
            <person name="Grahame D.A."/>
            <person name="Guss A.M."/>
            <person name="Hedderich R."/>
            <person name="Ingram-Smith C."/>
            <person name="Kuettner H.C."/>
            <person name="Krzycki J.A."/>
            <person name="Leigh J.A."/>
            <person name="Li W."/>
            <person name="Liu J."/>
            <person name="Mukhopadhyay B."/>
            <person name="Reeve J.N."/>
            <person name="Smith K."/>
            <person name="Springer T.A."/>
            <person name="Umayam L.A."/>
            <person name="White O."/>
            <person name="White R.H."/>
            <person name="de Macario E.C."/>
            <person name="Ferry J.G."/>
            <person name="Jarrell K.F."/>
            <person name="Jing H."/>
            <person name="Macario A.J.L."/>
            <person name="Paulsen I.T."/>
            <person name="Pritchett M."/>
            <person name="Sowers K.R."/>
            <person name="Swanson R.V."/>
            <person name="Zinder S.H."/>
            <person name="Lander E."/>
            <person name="Metcalf W.W."/>
            <person name="Birren B."/>
        </authorList>
    </citation>
    <scope>NUCLEOTIDE SEQUENCE [LARGE SCALE GENOMIC DNA]</scope>
    <source>
        <strain>ATCC 35395 / DSM 2834 / JCM 12185 / C2A</strain>
    </source>
</reference>
<accession>Q8TME2</accession>
<organism>
    <name type="scientific">Methanosarcina acetivorans (strain ATCC 35395 / DSM 2834 / JCM 12185 / C2A)</name>
    <dbReference type="NCBI Taxonomy" id="188937"/>
    <lineage>
        <taxon>Archaea</taxon>
        <taxon>Methanobacteriati</taxon>
        <taxon>Methanobacteriota</taxon>
        <taxon>Stenosarchaea group</taxon>
        <taxon>Methanomicrobia</taxon>
        <taxon>Methanosarcinales</taxon>
        <taxon>Methanosarcinaceae</taxon>
        <taxon>Methanosarcina</taxon>
    </lineage>
</organism>
<dbReference type="EC" id="2.5.1.72" evidence="1"/>
<dbReference type="EMBL" id="AE010299">
    <property type="protein sequence ID" value="AAM06095.1"/>
    <property type="molecule type" value="Genomic_DNA"/>
</dbReference>
<dbReference type="SMR" id="Q8TME2"/>
<dbReference type="FunCoup" id="Q8TME2">
    <property type="interactions" value="95"/>
</dbReference>
<dbReference type="STRING" id="188937.MA_2716"/>
<dbReference type="EnsemblBacteria" id="AAM06095">
    <property type="protein sequence ID" value="AAM06095"/>
    <property type="gene ID" value="MA_2716"/>
</dbReference>
<dbReference type="KEGG" id="mac:MA_2716"/>
<dbReference type="HOGENOM" id="CLU_047382_0_0_2"/>
<dbReference type="InParanoid" id="Q8TME2"/>
<dbReference type="PhylomeDB" id="Q8TME2"/>
<dbReference type="UniPathway" id="UPA00253">
    <property type="reaction ID" value="UER00327"/>
</dbReference>
<dbReference type="Proteomes" id="UP000002487">
    <property type="component" value="Chromosome"/>
</dbReference>
<dbReference type="GO" id="GO:0005737">
    <property type="term" value="C:cytoplasm"/>
    <property type="evidence" value="ECO:0007669"/>
    <property type="project" value="UniProtKB-SubCell"/>
</dbReference>
<dbReference type="GO" id="GO:0051539">
    <property type="term" value="F:4 iron, 4 sulfur cluster binding"/>
    <property type="evidence" value="ECO:0000318"/>
    <property type="project" value="GO_Central"/>
</dbReference>
<dbReference type="GO" id="GO:0046872">
    <property type="term" value="F:metal ion binding"/>
    <property type="evidence" value="ECO:0007669"/>
    <property type="project" value="UniProtKB-KW"/>
</dbReference>
<dbReference type="GO" id="GO:0008987">
    <property type="term" value="F:quinolinate synthetase A activity"/>
    <property type="evidence" value="ECO:0000318"/>
    <property type="project" value="GO_Central"/>
</dbReference>
<dbReference type="GO" id="GO:0034628">
    <property type="term" value="P:'de novo' NAD biosynthetic process from L-aspartate"/>
    <property type="evidence" value="ECO:0000318"/>
    <property type="project" value="GO_Central"/>
</dbReference>
<dbReference type="FunFam" id="3.40.50.10800:FF:000003">
    <property type="entry name" value="Quinolinate synthase A"/>
    <property type="match status" value="1"/>
</dbReference>
<dbReference type="Gene3D" id="3.40.50.10800">
    <property type="entry name" value="NadA-like"/>
    <property type="match status" value="3"/>
</dbReference>
<dbReference type="HAMAP" id="MF_00568">
    <property type="entry name" value="NadA_type2"/>
    <property type="match status" value="1"/>
</dbReference>
<dbReference type="InterPro" id="IPR003473">
    <property type="entry name" value="NadA"/>
</dbReference>
<dbReference type="InterPro" id="IPR036094">
    <property type="entry name" value="NadA_sf"/>
</dbReference>
<dbReference type="InterPro" id="IPR023066">
    <property type="entry name" value="Quinolinate_synth_type2"/>
</dbReference>
<dbReference type="NCBIfam" id="TIGR00550">
    <property type="entry name" value="nadA"/>
    <property type="match status" value="1"/>
</dbReference>
<dbReference type="NCBIfam" id="NF006878">
    <property type="entry name" value="PRK09375.1-2"/>
    <property type="match status" value="1"/>
</dbReference>
<dbReference type="PANTHER" id="PTHR30573:SF0">
    <property type="entry name" value="QUINOLINATE SYNTHASE, CHLOROPLASTIC"/>
    <property type="match status" value="1"/>
</dbReference>
<dbReference type="PANTHER" id="PTHR30573">
    <property type="entry name" value="QUINOLINATE SYNTHETASE A"/>
    <property type="match status" value="1"/>
</dbReference>
<dbReference type="Pfam" id="PF02445">
    <property type="entry name" value="NadA"/>
    <property type="match status" value="1"/>
</dbReference>
<dbReference type="SUPFAM" id="SSF142754">
    <property type="entry name" value="NadA-like"/>
    <property type="match status" value="1"/>
</dbReference>
<name>NADA2_METAC</name>
<sequence>MENGVVMEDRLIAEEIKKLKEERNAIILAHFYTRGEVREFADFVGDSLSLCREAVNSKADVIVFAGVHFMAESASILSPEKSVLLPVPEAGCPMADMVTVETLRKEKEKHPDAAVVCYVNSSAAVKAESDICCTSSNAVNVVNSVENREIIFVPDKNLGAFVSLHTDKKIHLRPGFCHVHENIGKEDIEELKNLHPEAEFLAHPECRPEVMSFADHILSTSGIVKEAGRSESTEFIIGTEKEIVQSLKRKYPDRKFYPVSKKAVCYNMKKVTLESILNSLQNMEYEVQVPEHVRAKAKKALDRMLSVSGT</sequence>
<proteinExistence type="inferred from homology"/>
<protein>
    <recommendedName>
        <fullName evidence="1">Quinolinate synthase 2</fullName>
        <ecNumber evidence="1">2.5.1.72</ecNumber>
    </recommendedName>
</protein>